<feature type="chain" id="PRO_1000011044" description="N-acetyl-gamma-glutamyl-phosphate reductase">
    <location>
        <begin position="1"/>
        <end position="344"/>
    </location>
</feature>
<feature type="active site" evidence="1">
    <location>
        <position position="150"/>
    </location>
</feature>
<organism>
    <name type="scientific">Pseudomonas fluorescens (strain Pf0-1)</name>
    <dbReference type="NCBI Taxonomy" id="205922"/>
    <lineage>
        <taxon>Bacteria</taxon>
        <taxon>Pseudomonadati</taxon>
        <taxon>Pseudomonadota</taxon>
        <taxon>Gammaproteobacteria</taxon>
        <taxon>Pseudomonadales</taxon>
        <taxon>Pseudomonadaceae</taxon>
        <taxon>Pseudomonas</taxon>
    </lineage>
</organism>
<dbReference type="EC" id="1.2.1.38" evidence="1"/>
<dbReference type="EMBL" id="CP000094">
    <property type="protein sequence ID" value="ABA76839.1"/>
    <property type="molecule type" value="Genomic_DNA"/>
</dbReference>
<dbReference type="RefSeq" id="WP_011336183.1">
    <property type="nucleotide sequence ID" value="NC_007492.2"/>
</dbReference>
<dbReference type="SMR" id="Q3K5W5"/>
<dbReference type="KEGG" id="pfo:Pfl01_5102"/>
<dbReference type="eggNOG" id="COG0002">
    <property type="taxonomic scope" value="Bacteria"/>
</dbReference>
<dbReference type="HOGENOM" id="CLU_006384_0_1_6"/>
<dbReference type="UniPathway" id="UPA00068">
    <property type="reaction ID" value="UER00108"/>
</dbReference>
<dbReference type="Proteomes" id="UP000002704">
    <property type="component" value="Chromosome"/>
</dbReference>
<dbReference type="GO" id="GO:0005737">
    <property type="term" value="C:cytoplasm"/>
    <property type="evidence" value="ECO:0007669"/>
    <property type="project" value="UniProtKB-SubCell"/>
</dbReference>
<dbReference type="GO" id="GO:0003942">
    <property type="term" value="F:N-acetyl-gamma-glutamyl-phosphate reductase activity"/>
    <property type="evidence" value="ECO:0007669"/>
    <property type="project" value="UniProtKB-UniRule"/>
</dbReference>
<dbReference type="GO" id="GO:0051287">
    <property type="term" value="F:NAD binding"/>
    <property type="evidence" value="ECO:0007669"/>
    <property type="project" value="InterPro"/>
</dbReference>
<dbReference type="GO" id="GO:0070401">
    <property type="term" value="F:NADP+ binding"/>
    <property type="evidence" value="ECO:0007669"/>
    <property type="project" value="InterPro"/>
</dbReference>
<dbReference type="GO" id="GO:0006526">
    <property type="term" value="P:L-arginine biosynthetic process"/>
    <property type="evidence" value="ECO:0007669"/>
    <property type="project" value="UniProtKB-UniRule"/>
</dbReference>
<dbReference type="CDD" id="cd23934">
    <property type="entry name" value="AGPR_1_C"/>
    <property type="match status" value="1"/>
</dbReference>
<dbReference type="CDD" id="cd17895">
    <property type="entry name" value="AGPR_1_N"/>
    <property type="match status" value="1"/>
</dbReference>
<dbReference type="FunFam" id="3.30.360.10:FF:000014">
    <property type="entry name" value="N-acetyl-gamma-glutamyl-phosphate reductase"/>
    <property type="match status" value="1"/>
</dbReference>
<dbReference type="Gene3D" id="3.30.360.10">
    <property type="entry name" value="Dihydrodipicolinate Reductase, domain 2"/>
    <property type="match status" value="1"/>
</dbReference>
<dbReference type="Gene3D" id="3.40.50.720">
    <property type="entry name" value="NAD(P)-binding Rossmann-like Domain"/>
    <property type="match status" value="1"/>
</dbReference>
<dbReference type="HAMAP" id="MF_00150">
    <property type="entry name" value="ArgC_type1"/>
    <property type="match status" value="1"/>
</dbReference>
<dbReference type="InterPro" id="IPR023013">
    <property type="entry name" value="AGPR_AS"/>
</dbReference>
<dbReference type="InterPro" id="IPR000706">
    <property type="entry name" value="AGPR_type-1"/>
</dbReference>
<dbReference type="InterPro" id="IPR036291">
    <property type="entry name" value="NAD(P)-bd_dom_sf"/>
</dbReference>
<dbReference type="InterPro" id="IPR050085">
    <property type="entry name" value="NAGSA_dehydrogenase"/>
</dbReference>
<dbReference type="InterPro" id="IPR000534">
    <property type="entry name" value="Semialdehyde_DH_NAD-bd"/>
</dbReference>
<dbReference type="NCBIfam" id="TIGR01850">
    <property type="entry name" value="argC"/>
    <property type="match status" value="1"/>
</dbReference>
<dbReference type="PANTHER" id="PTHR32338:SF10">
    <property type="entry name" value="N-ACETYL-GAMMA-GLUTAMYL-PHOSPHATE REDUCTASE, CHLOROPLASTIC-RELATED"/>
    <property type="match status" value="1"/>
</dbReference>
<dbReference type="PANTHER" id="PTHR32338">
    <property type="entry name" value="N-ACETYL-GAMMA-GLUTAMYL-PHOSPHATE REDUCTASE, CHLOROPLASTIC-RELATED-RELATED"/>
    <property type="match status" value="1"/>
</dbReference>
<dbReference type="Pfam" id="PF01118">
    <property type="entry name" value="Semialdhyde_dh"/>
    <property type="match status" value="1"/>
</dbReference>
<dbReference type="Pfam" id="PF22698">
    <property type="entry name" value="Semialdhyde_dhC_1"/>
    <property type="match status" value="1"/>
</dbReference>
<dbReference type="SMART" id="SM00859">
    <property type="entry name" value="Semialdhyde_dh"/>
    <property type="match status" value="1"/>
</dbReference>
<dbReference type="SUPFAM" id="SSF55347">
    <property type="entry name" value="Glyceraldehyde-3-phosphate dehydrogenase-like, C-terminal domain"/>
    <property type="match status" value="1"/>
</dbReference>
<dbReference type="SUPFAM" id="SSF51735">
    <property type="entry name" value="NAD(P)-binding Rossmann-fold domains"/>
    <property type="match status" value="1"/>
</dbReference>
<dbReference type="PROSITE" id="PS01224">
    <property type="entry name" value="ARGC"/>
    <property type="match status" value="1"/>
</dbReference>
<evidence type="ECO:0000255" key="1">
    <source>
        <dbReference type="HAMAP-Rule" id="MF_00150"/>
    </source>
</evidence>
<name>ARGC_PSEPF</name>
<reference key="1">
    <citation type="journal article" date="2009" name="Genome Biol.">
        <title>Genomic and genetic analyses of diversity and plant interactions of Pseudomonas fluorescens.</title>
        <authorList>
            <person name="Silby M.W."/>
            <person name="Cerdeno-Tarraga A.M."/>
            <person name="Vernikos G.S."/>
            <person name="Giddens S.R."/>
            <person name="Jackson R.W."/>
            <person name="Preston G.M."/>
            <person name="Zhang X.-X."/>
            <person name="Moon C.D."/>
            <person name="Gehrig S.M."/>
            <person name="Godfrey S.A.C."/>
            <person name="Knight C.G."/>
            <person name="Malone J.G."/>
            <person name="Robinson Z."/>
            <person name="Spiers A.J."/>
            <person name="Harris S."/>
            <person name="Challis G.L."/>
            <person name="Yaxley A.M."/>
            <person name="Harris D."/>
            <person name="Seeger K."/>
            <person name="Murphy L."/>
            <person name="Rutter S."/>
            <person name="Squares R."/>
            <person name="Quail M.A."/>
            <person name="Saunders E."/>
            <person name="Mavromatis K."/>
            <person name="Brettin T.S."/>
            <person name="Bentley S.D."/>
            <person name="Hothersall J."/>
            <person name="Stephens E."/>
            <person name="Thomas C.M."/>
            <person name="Parkhill J."/>
            <person name="Levy S.B."/>
            <person name="Rainey P.B."/>
            <person name="Thomson N.R."/>
        </authorList>
    </citation>
    <scope>NUCLEOTIDE SEQUENCE [LARGE SCALE GENOMIC DNA]</scope>
    <source>
        <strain>Pf0-1</strain>
    </source>
</reference>
<sequence length="344" mass="36637">MVKVGIVGGTGYTGVELLRLLAQHPQAEVVVITSRSEAGLAVADMYPNLRGHYDGLAFSVPDIKTLGACDVVFFATPHGVAHALAGELLAAGTKVIDLSADFRLQDADEWAKWYGQPHGAPELLDEAVYGLPEVNREQIRKARLIAVPGCYPTATQLGFLPLLEAGIADASHLIADCKSGVSGAGRGAAVGSLYSETSESMKAYAVKGHRHLPEIRQGLRRAAGKDVGLTFVPHLTPMIRGIHSTLYATVVDRSVDLQALFEKRYANEPFVDVMPAGSHPETRSVRGANVCRIAVHRPQDGDLVVVLSVIDNLVKGASGQAVQNMNILFGLDERLGLSHAGMLP</sequence>
<proteinExistence type="inferred from homology"/>
<keyword id="KW-0028">Amino-acid biosynthesis</keyword>
<keyword id="KW-0055">Arginine biosynthesis</keyword>
<keyword id="KW-0963">Cytoplasm</keyword>
<keyword id="KW-0521">NADP</keyword>
<keyword id="KW-0560">Oxidoreductase</keyword>
<gene>
    <name evidence="1" type="primary">argC</name>
    <name type="ordered locus">Pfl01_5102</name>
</gene>
<protein>
    <recommendedName>
        <fullName evidence="1">N-acetyl-gamma-glutamyl-phosphate reductase</fullName>
        <shortName evidence="1">AGPR</shortName>
        <ecNumber evidence="1">1.2.1.38</ecNumber>
    </recommendedName>
    <alternativeName>
        <fullName evidence="1">N-acetyl-glutamate semialdehyde dehydrogenase</fullName>
        <shortName evidence="1">NAGSA dehydrogenase</shortName>
    </alternativeName>
</protein>
<accession>Q3K5W5</accession>
<comment type="function">
    <text evidence="1">Catalyzes the NADPH-dependent reduction of N-acetyl-5-glutamyl phosphate to yield N-acetyl-L-glutamate 5-semialdehyde.</text>
</comment>
<comment type="catalytic activity">
    <reaction evidence="1">
        <text>N-acetyl-L-glutamate 5-semialdehyde + phosphate + NADP(+) = N-acetyl-L-glutamyl 5-phosphate + NADPH + H(+)</text>
        <dbReference type="Rhea" id="RHEA:21588"/>
        <dbReference type="ChEBI" id="CHEBI:15378"/>
        <dbReference type="ChEBI" id="CHEBI:29123"/>
        <dbReference type="ChEBI" id="CHEBI:43474"/>
        <dbReference type="ChEBI" id="CHEBI:57783"/>
        <dbReference type="ChEBI" id="CHEBI:57936"/>
        <dbReference type="ChEBI" id="CHEBI:58349"/>
        <dbReference type="EC" id="1.2.1.38"/>
    </reaction>
</comment>
<comment type="pathway">
    <text evidence="1">Amino-acid biosynthesis; L-arginine biosynthesis; N(2)-acetyl-L-ornithine from L-glutamate: step 3/4.</text>
</comment>
<comment type="subcellular location">
    <subcellularLocation>
        <location evidence="1">Cytoplasm</location>
    </subcellularLocation>
</comment>
<comment type="similarity">
    <text evidence="1">Belongs to the NAGSA dehydrogenase family. Type 1 subfamily.</text>
</comment>